<accession>Q9C2Y6</accession>
<sequence>MATNITWHPNLTYDERKELRKQDGCTVWLTGLSASGKSTIACALEQLLLQKNLSAYRLDGDNIRFGLNKDLGFSEKDRNENIRRISEVSKLFADSCAVSITSFISPYRVDRDRARDLHKEAGLKFIEIFVDVPLEVAEQRDPKGLYKKAREGVIKEFTGISAPYEAPKAPELHLRTDQKTVEECAAIIYEYLVNEKIIRKHL</sequence>
<keyword id="KW-0028">Amino-acid biosynthesis</keyword>
<keyword id="KW-0067">ATP-binding</keyword>
<keyword id="KW-0198">Cysteine biosynthesis</keyword>
<keyword id="KW-0418">Kinase</keyword>
<keyword id="KW-0486">Methionine biosynthesis</keyword>
<keyword id="KW-0547">Nucleotide-binding</keyword>
<keyword id="KW-0597">Phosphoprotein</keyword>
<keyword id="KW-0808">Transferase</keyword>
<name>KAPS_SACPS</name>
<proteinExistence type="inferred from homology"/>
<comment type="function">
    <text>Catalyzes the synthesis of activated sulfate.</text>
</comment>
<comment type="catalytic activity">
    <reaction>
        <text>adenosine 5'-phosphosulfate + ATP = 3'-phosphoadenylyl sulfate + ADP + H(+)</text>
        <dbReference type="Rhea" id="RHEA:24152"/>
        <dbReference type="ChEBI" id="CHEBI:15378"/>
        <dbReference type="ChEBI" id="CHEBI:30616"/>
        <dbReference type="ChEBI" id="CHEBI:58243"/>
        <dbReference type="ChEBI" id="CHEBI:58339"/>
        <dbReference type="ChEBI" id="CHEBI:456216"/>
        <dbReference type="EC" id="2.7.1.25"/>
    </reaction>
</comment>
<comment type="pathway">
    <text>Sulfur metabolism; hydrogen sulfide biosynthesis; sulfite from sulfate: step 2/3.</text>
</comment>
<comment type="similarity">
    <text evidence="2">Belongs to the APS kinase family.</text>
</comment>
<organism>
    <name type="scientific">Saccharomyces pastorianus</name>
    <name type="common">Lager yeast</name>
    <name type="synonym">Saccharomyces cerevisiae x Saccharomyces eubayanus</name>
    <dbReference type="NCBI Taxonomy" id="27292"/>
    <lineage>
        <taxon>Eukaryota</taxon>
        <taxon>Fungi</taxon>
        <taxon>Dikarya</taxon>
        <taxon>Ascomycota</taxon>
        <taxon>Saccharomycotina</taxon>
        <taxon>Saccharomycetes</taxon>
        <taxon>Saccharomycetales</taxon>
        <taxon>Saccharomycetaceae</taxon>
        <taxon>Saccharomyces</taxon>
    </lineage>
</organism>
<gene>
    <name type="primary">MET14</name>
</gene>
<dbReference type="EC" id="2.7.1.25"/>
<dbReference type="EMBL" id="AY017216">
    <property type="protein sequence ID" value="AAK00577.1"/>
    <property type="molecule type" value="Genomic_DNA"/>
</dbReference>
<dbReference type="SMR" id="Q9C2Y6"/>
<dbReference type="OrthoDB" id="506431at2759"/>
<dbReference type="UniPathway" id="UPA00140">
    <property type="reaction ID" value="UER00205"/>
</dbReference>
<dbReference type="GO" id="GO:0004020">
    <property type="term" value="F:adenylylsulfate kinase activity"/>
    <property type="evidence" value="ECO:0007669"/>
    <property type="project" value="UniProtKB-EC"/>
</dbReference>
<dbReference type="GO" id="GO:0005524">
    <property type="term" value="F:ATP binding"/>
    <property type="evidence" value="ECO:0007669"/>
    <property type="project" value="UniProtKB-KW"/>
</dbReference>
<dbReference type="GO" id="GO:0019344">
    <property type="term" value="P:cysteine biosynthetic process"/>
    <property type="evidence" value="ECO:0007669"/>
    <property type="project" value="UniProtKB-KW"/>
</dbReference>
<dbReference type="GO" id="GO:0070814">
    <property type="term" value="P:hydrogen sulfide biosynthetic process"/>
    <property type="evidence" value="ECO:0007669"/>
    <property type="project" value="UniProtKB-UniPathway"/>
</dbReference>
<dbReference type="GO" id="GO:0009086">
    <property type="term" value="P:methionine biosynthetic process"/>
    <property type="evidence" value="ECO:0007669"/>
    <property type="project" value="UniProtKB-KW"/>
</dbReference>
<dbReference type="GO" id="GO:0000103">
    <property type="term" value="P:sulfate assimilation"/>
    <property type="evidence" value="ECO:0007669"/>
    <property type="project" value="InterPro"/>
</dbReference>
<dbReference type="CDD" id="cd02027">
    <property type="entry name" value="APSK"/>
    <property type="match status" value="1"/>
</dbReference>
<dbReference type="FunFam" id="3.40.50.300:FF:000212">
    <property type="entry name" value="Adenylyl-sulfate kinase"/>
    <property type="match status" value="1"/>
</dbReference>
<dbReference type="Gene3D" id="3.40.50.300">
    <property type="entry name" value="P-loop containing nucleotide triphosphate hydrolases"/>
    <property type="match status" value="1"/>
</dbReference>
<dbReference type="HAMAP" id="MF_00065">
    <property type="entry name" value="Adenylyl_sulf_kinase"/>
    <property type="match status" value="1"/>
</dbReference>
<dbReference type="InterPro" id="IPR002891">
    <property type="entry name" value="APS_kinase"/>
</dbReference>
<dbReference type="InterPro" id="IPR027417">
    <property type="entry name" value="P-loop_NTPase"/>
</dbReference>
<dbReference type="NCBIfam" id="TIGR00455">
    <property type="entry name" value="apsK"/>
    <property type="match status" value="1"/>
</dbReference>
<dbReference type="NCBIfam" id="NF003013">
    <property type="entry name" value="PRK03846.1"/>
    <property type="match status" value="1"/>
</dbReference>
<dbReference type="PANTHER" id="PTHR11055">
    <property type="entry name" value="BIFUNCTIONAL 3'-PHOSPHOADENOSINE 5'-PHOSPHOSULFATE SYNTHASE"/>
    <property type="match status" value="1"/>
</dbReference>
<dbReference type="PANTHER" id="PTHR11055:SF1">
    <property type="entry name" value="PAPS SYNTHETASE, ISOFORM D"/>
    <property type="match status" value="1"/>
</dbReference>
<dbReference type="Pfam" id="PF01583">
    <property type="entry name" value="APS_kinase"/>
    <property type="match status" value="1"/>
</dbReference>
<dbReference type="SUPFAM" id="SSF52540">
    <property type="entry name" value="P-loop containing nucleoside triphosphate hydrolases"/>
    <property type="match status" value="1"/>
</dbReference>
<feature type="chain" id="PRO_0000105935" description="Adenylyl-sulfate kinase">
    <location>
        <begin position="1"/>
        <end position="202"/>
    </location>
</feature>
<feature type="active site" description="Phosphoserine intermediate" evidence="1">
    <location>
        <position position="105"/>
    </location>
</feature>
<feature type="binding site" evidence="1">
    <location>
        <begin position="31"/>
        <end position="38"/>
    </location>
    <ligand>
        <name>ATP</name>
        <dbReference type="ChEBI" id="CHEBI:30616"/>
    </ligand>
</feature>
<reference key="1">
    <citation type="journal article" date="2002" name="FEMS Yeast Res.">
        <title>Differential transcriptional regulation of sulfur assimilation gene homologues in the Saccharomyces carlsbergensis yeast species hybrid.</title>
        <authorList>
            <person name="Johannesen P.F."/>
            <person name="Hansen J."/>
        </authorList>
    </citation>
    <scope>NUCLEOTIDE SEQUENCE [GENOMIC DNA]</scope>
    <source>
        <strain>M204</strain>
    </source>
</reference>
<protein>
    <recommendedName>
        <fullName>Adenylyl-sulfate kinase</fullName>
        <ecNumber>2.7.1.25</ecNumber>
    </recommendedName>
    <alternativeName>
        <fullName>ATP adenosine-5'-phosphosulfate 3'-phosphotransferase</fullName>
    </alternativeName>
    <alternativeName>
        <fullName>Adenosine-5'-phosphosulfate kinase</fullName>
        <shortName>APS kinase</shortName>
    </alternativeName>
</protein>
<evidence type="ECO:0000250" key="1"/>
<evidence type="ECO:0000305" key="2"/>